<protein>
    <recommendedName>
        <fullName evidence="1">Potassium/proton antiporter CemA</fullName>
    </recommendedName>
    <alternativeName>
        <fullName evidence="1">Chloroplast envelope membrane protein A</fullName>
        <shortName evidence="1">CemA</shortName>
    </alternativeName>
</protein>
<proteinExistence type="inferred from homology"/>
<organism>
    <name type="scientific">Rhodomonas salina</name>
    <name type="common">Cryptomonas salina</name>
    <dbReference type="NCBI Taxonomy" id="52970"/>
    <lineage>
        <taxon>Eukaryota</taxon>
        <taxon>Cryptophyceae</taxon>
        <taxon>Pyrenomonadales</taxon>
        <taxon>Pyrenomonadaceae</taxon>
        <taxon>Rhodomonas</taxon>
    </lineage>
</organism>
<accession>A6MVV9</accession>
<gene>
    <name evidence="1" type="primary">cemA</name>
</gene>
<keyword id="KW-0050">Antiport</keyword>
<keyword id="KW-0150">Chloroplast</keyword>
<keyword id="KW-0375">Hydrogen ion transport</keyword>
<keyword id="KW-0406">Ion transport</keyword>
<keyword id="KW-0472">Membrane</keyword>
<keyword id="KW-0934">Plastid</keyword>
<keyword id="KW-1001">Plastid inner membrane</keyword>
<keyword id="KW-0630">Potassium</keyword>
<keyword id="KW-0633">Potassium transport</keyword>
<keyword id="KW-0812">Transmembrane</keyword>
<keyword id="KW-1133">Transmembrane helix</keyword>
<keyword id="KW-0813">Transport</keyword>
<reference key="1">
    <citation type="journal article" date="2007" name="Mol. Biol. Evol.">
        <title>Plastid genome sequence of the cryptophyte alga Rhodomonas salina CCMP1319: lateral transfer of putative DNA replication machinery and a test of chromist plastid phylogeny.</title>
        <authorList>
            <person name="Khan H."/>
            <person name="Parks N."/>
            <person name="Kozera C."/>
            <person name="Curtis B.A."/>
            <person name="Parsons B.J."/>
            <person name="Bowman S."/>
            <person name="Archibald J.M."/>
        </authorList>
    </citation>
    <scope>NUCLEOTIDE SEQUENCE [LARGE SCALE GENOMIC DNA]</scope>
    <source>
        <strain>CCMP1319 / NEPCC76 / CS-174</strain>
    </source>
</reference>
<dbReference type="EMBL" id="EF508371">
    <property type="protein sequence ID" value="ABO70824.1"/>
    <property type="molecule type" value="Genomic_DNA"/>
</dbReference>
<dbReference type="RefSeq" id="YP_001293538.1">
    <property type="nucleotide sequence ID" value="NC_009573.1"/>
</dbReference>
<dbReference type="SMR" id="A6MVV9"/>
<dbReference type="GeneID" id="5228554"/>
<dbReference type="GO" id="GO:0009706">
    <property type="term" value="C:chloroplast inner membrane"/>
    <property type="evidence" value="ECO:0007669"/>
    <property type="project" value="UniProtKB-SubCell"/>
</dbReference>
<dbReference type="GO" id="GO:0015297">
    <property type="term" value="F:antiporter activity"/>
    <property type="evidence" value="ECO:0007669"/>
    <property type="project" value="UniProtKB-KW"/>
</dbReference>
<dbReference type="GO" id="GO:0015078">
    <property type="term" value="F:proton transmembrane transporter activity"/>
    <property type="evidence" value="ECO:0007669"/>
    <property type="project" value="UniProtKB-UniRule"/>
</dbReference>
<dbReference type="GO" id="GO:0006813">
    <property type="term" value="P:potassium ion transport"/>
    <property type="evidence" value="ECO:0007669"/>
    <property type="project" value="UniProtKB-UniRule"/>
</dbReference>
<dbReference type="HAMAP" id="MF_01308">
    <property type="entry name" value="CemA_PxcA"/>
    <property type="match status" value="1"/>
</dbReference>
<dbReference type="InterPro" id="IPR004282">
    <property type="entry name" value="CemA"/>
</dbReference>
<dbReference type="PANTHER" id="PTHR33650:SF2">
    <property type="entry name" value="CHLOROPLAST ENVELOPE MEMBRANE PROTEIN"/>
    <property type="match status" value="1"/>
</dbReference>
<dbReference type="PANTHER" id="PTHR33650">
    <property type="entry name" value="CHLOROPLAST ENVELOPE MEMBRANE PROTEIN-RELATED"/>
    <property type="match status" value="1"/>
</dbReference>
<dbReference type="Pfam" id="PF03040">
    <property type="entry name" value="CemA"/>
    <property type="match status" value="1"/>
</dbReference>
<evidence type="ECO:0000255" key="1">
    <source>
        <dbReference type="HAMAP-Rule" id="MF_01308"/>
    </source>
</evidence>
<evidence type="ECO:0000305" key="2"/>
<comment type="function">
    <text evidence="1">Contributes to K(+)/H(+) antiport activity by supporting proton efflux to control proton extrusion and homeostasis in chloroplasts in a light-dependent manner to modulate photosynthesis. Prevents excessive induction of non-photochemical quenching (NPQ) under continuous-light conditions. Indirectly promotes efficient inorganic carbon uptake into chloroplasts.</text>
</comment>
<comment type="catalytic activity">
    <reaction evidence="1">
        <text>K(+)(in) + H(+)(out) = K(+)(out) + H(+)(in)</text>
        <dbReference type="Rhea" id="RHEA:29467"/>
        <dbReference type="ChEBI" id="CHEBI:15378"/>
        <dbReference type="ChEBI" id="CHEBI:29103"/>
    </reaction>
</comment>
<comment type="subcellular location">
    <subcellularLocation>
        <location evidence="1">Plastid</location>
        <location evidence="1">Chloroplast inner membrane</location>
        <topology evidence="1">Multi-pass membrane protein</topology>
    </subcellularLocation>
</comment>
<comment type="similarity">
    <text evidence="1 2">Belongs to the CemA family.</text>
</comment>
<geneLocation type="chloroplast"/>
<feature type="chain" id="PRO_0000323248" description="Potassium/proton antiporter CemA">
    <location>
        <begin position="1"/>
        <end position="278"/>
    </location>
</feature>
<feature type="transmembrane region" description="Helical" evidence="1">
    <location>
        <begin position="60"/>
        <end position="80"/>
    </location>
</feature>
<feature type="transmembrane region" description="Helical" evidence="1">
    <location>
        <begin position="155"/>
        <end position="175"/>
    </location>
</feature>
<feature type="transmembrane region" description="Helical" evidence="1">
    <location>
        <begin position="201"/>
        <end position="221"/>
    </location>
</feature>
<feature type="transmembrane region" description="Helical" evidence="1">
    <location>
        <begin position="239"/>
        <end position="259"/>
    </location>
</feature>
<sequence>MKNWRLNNVTPSAFEKTGPIPRSITKTFEKFKKELDPNSESEVIEEFRVSRYQTAASIKYLLLLITVPLIVNQISKSFVFSPFVDYFWNDNQNDIFLNESQEERAFSELQRFEEKIHFEILIGQSPPLSQESIDKEIKHKAVELAQYYVQESTDAMKNLLADVLAFVTFVYLIVTGRRQISVLKSFVNELIYGLSDTAKAFLIILFTDIFVGFHSTHGWEVVLENGLRHFGLPENRDLIFLFIATFPVVLDTVFKYWIFRYLNQVSPSAVATYKDMNE</sequence>
<name>CEMA_RHDSA</name>